<gene>
    <name evidence="1" type="primary">petB</name>
</gene>
<evidence type="ECO:0000255" key="1">
    <source>
        <dbReference type="HAMAP-Rule" id="MF_00633"/>
    </source>
</evidence>
<dbReference type="EMBL" id="AP007232">
    <property type="protein sequence ID" value="BAE47625.1"/>
    <property type="molecule type" value="Genomic_DNA"/>
</dbReference>
<dbReference type="EMBL" id="DQ383816">
    <property type="protein sequence ID" value="ABD47262.1"/>
    <property type="molecule type" value="Genomic_DNA"/>
</dbReference>
<dbReference type="RefSeq" id="YP_398358.1">
    <property type="nucleotide sequence ID" value="NC_007578.1"/>
</dbReference>
<dbReference type="SMR" id="Q332U7"/>
<dbReference type="GeneID" id="3772863"/>
<dbReference type="KEGG" id="lsv:3772863"/>
<dbReference type="OrthoDB" id="1663482at2759"/>
<dbReference type="GO" id="GO:0009535">
    <property type="term" value="C:chloroplast thylakoid membrane"/>
    <property type="evidence" value="ECO:0007669"/>
    <property type="project" value="UniProtKB-SubCell"/>
</dbReference>
<dbReference type="GO" id="GO:0045158">
    <property type="term" value="F:electron transporter, transferring electrons within cytochrome b6/f complex of photosystem II activity"/>
    <property type="evidence" value="ECO:0007669"/>
    <property type="project" value="UniProtKB-UniRule"/>
</dbReference>
<dbReference type="GO" id="GO:0046872">
    <property type="term" value="F:metal ion binding"/>
    <property type="evidence" value="ECO:0007669"/>
    <property type="project" value="UniProtKB-KW"/>
</dbReference>
<dbReference type="GO" id="GO:0016491">
    <property type="term" value="F:oxidoreductase activity"/>
    <property type="evidence" value="ECO:0007669"/>
    <property type="project" value="InterPro"/>
</dbReference>
<dbReference type="GO" id="GO:0015979">
    <property type="term" value="P:photosynthesis"/>
    <property type="evidence" value="ECO:0007669"/>
    <property type="project" value="UniProtKB-UniRule"/>
</dbReference>
<dbReference type="GO" id="GO:0022904">
    <property type="term" value="P:respiratory electron transport chain"/>
    <property type="evidence" value="ECO:0007669"/>
    <property type="project" value="InterPro"/>
</dbReference>
<dbReference type="CDD" id="cd00284">
    <property type="entry name" value="Cytochrome_b_N"/>
    <property type="match status" value="1"/>
</dbReference>
<dbReference type="FunFam" id="1.20.810.10:FF:000001">
    <property type="entry name" value="Cytochrome b6"/>
    <property type="match status" value="1"/>
</dbReference>
<dbReference type="Gene3D" id="1.20.810.10">
    <property type="entry name" value="Cytochrome Bc1 Complex, Chain C"/>
    <property type="match status" value="1"/>
</dbReference>
<dbReference type="HAMAP" id="MF_00633">
    <property type="entry name" value="Cytb6_f_cytb6"/>
    <property type="match status" value="1"/>
</dbReference>
<dbReference type="InterPro" id="IPR005797">
    <property type="entry name" value="Cyt_b/b6_N"/>
</dbReference>
<dbReference type="InterPro" id="IPR023530">
    <property type="entry name" value="Cyt_B6_PetB"/>
</dbReference>
<dbReference type="InterPro" id="IPR027387">
    <property type="entry name" value="Cytb/b6-like_sf"/>
</dbReference>
<dbReference type="InterPro" id="IPR048259">
    <property type="entry name" value="Cytochrome_b_N_euk/bac"/>
</dbReference>
<dbReference type="InterPro" id="IPR016174">
    <property type="entry name" value="Di-haem_cyt_TM"/>
</dbReference>
<dbReference type="NCBIfam" id="NF002990">
    <property type="entry name" value="PRK03735.1"/>
    <property type="match status" value="1"/>
</dbReference>
<dbReference type="PANTHER" id="PTHR19271">
    <property type="entry name" value="CYTOCHROME B"/>
    <property type="match status" value="1"/>
</dbReference>
<dbReference type="PANTHER" id="PTHR19271:SF16">
    <property type="entry name" value="CYTOCHROME B"/>
    <property type="match status" value="1"/>
</dbReference>
<dbReference type="Pfam" id="PF00033">
    <property type="entry name" value="Cytochrome_B"/>
    <property type="match status" value="1"/>
</dbReference>
<dbReference type="PIRSF" id="PIRSF000032">
    <property type="entry name" value="Cytochrome_b6"/>
    <property type="match status" value="1"/>
</dbReference>
<dbReference type="SUPFAM" id="SSF81342">
    <property type="entry name" value="Transmembrane di-heme cytochromes"/>
    <property type="match status" value="1"/>
</dbReference>
<dbReference type="PROSITE" id="PS51002">
    <property type="entry name" value="CYTB_NTER"/>
    <property type="match status" value="1"/>
</dbReference>
<sequence>MSKVYDWFEERLEIQAIADDITSKYVPPHVNIFYCLGGITLTCFLVQVATGFAMTFYYRPTVTDAFASVQYIMTEANFGWLIRSVHRWSASMMVLMMILHVFRVYLTGGFKKPRELTWVTGVVLGVLTASFGVTGYSLPRDQIGYWAVKIVTGVPEAIPVIGSPLVELLRGSASVGQSTLTRFYSLHTFVLPLLTAVFMLMHFPMIRKQGISGPL</sequence>
<protein>
    <recommendedName>
        <fullName evidence="1">Cytochrome b6</fullName>
    </recommendedName>
</protein>
<accession>Q332U7</accession>
<reference key="1">
    <citation type="journal article" date="2006" name="Transgenic Res.">
        <title>Efficient and stable transformation of Lactuca sativa L. cv. Cisco (lettuce) plastids.</title>
        <authorList>
            <person name="Kanamoto H."/>
            <person name="Yamashita A."/>
            <person name="Asao H."/>
            <person name="Okumura S."/>
            <person name="Takase H."/>
            <person name="Hattori M."/>
            <person name="Yokota A."/>
            <person name="Tomizawa K."/>
        </authorList>
    </citation>
    <scope>NUCLEOTIDE SEQUENCE [LARGE SCALE GENOMIC DNA]</scope>
    <source>
        <strain>cv. Cisco</strain>
    </source>
</reference>
<reference key="2">
    <citation type="submission" date="2006-01" db="EMBL/GenBank/DDBJ databases">
        <title>A comparison of the first two published chloroplast genomes in Asteraceae: Lactuca and Helianthus.</title>
        <authorList>
            <person name="Timme R.E."/>
            <person name="Kuehl J.V."/>
            <person name="Boore J.L."/>
            <person name="Jansen R.K."/>
        </authorList>
    </citation>
    <scope>NUCLEOTIDE SEQUENCE [LARGE SCALE GENOMIC DNA]</scope>
    <source>
        <strain>cv. Salinas</strain>
    </source>
</reference>
<proteinExistence type="inferred from homology"/>
<organism>
    <name type="scientific">Lactuca sativa</name>
    <name type="common">Garden lettuce</name>
    <dbReference type="NCBI Taxonomy" id="4236"/>
    <lineage>
        <taxon>Eukaryota</taxon>
        <taxon>Viridiplantae</taxon>
        <taxon>Streptophyta</taxon>
        <taxon>Embryophyta</taxon>
        <taxon>Tracheophyta</taxon>
        <taxon>Spermatophyta</taxon>
        <taxon>Magnoliopsida</taxon>
        <taxon>eudicotyledons</taxon>
        <taxon>Gunneridae</taxon>
        <taxon>Pentapetalae</taxon>
        <taxon>asterids</taxon>
        <taxon>campanulids</taxon>
        <taxon>Asterales</taxon>
        <taxon>Asteraceae</taxon>
        <taxon>Cichorioideae</taxon>
        <taxon>Cichorieae</taxon>
        <taxon>Lactucinae</taxon>
        <taxon>Lactuca</taxon>
    </lineage>
</organism>
<comment type="function">
    <text evidence="1">Component of the cytochrome b6-f complex, which mediates electron transfer between photosystem II (PSII) and photosystem I (PSI), cyclic electron flow around PSI, and state transitions.</text>
</comment>
<comment type="cofactor">
    <cofactor evidence="1">
        <name>heme b</name>
        <dbReference type="ChEBI" id="CHEBI:60344"/>
    </cofactor>
    <text evidence="1">Binds 2 heme b groups non-covalently with two histidine residues as axial ligands.</text>
</comment>
<comment type="cofactor">
    <cofactor evidence="1">
        <name>heme c</name>
        <dbReference type="ChEBI" id="CHEBI:61717"/>
    </cofactor>
    <text evidence="1">Binds one heme group covalently by a single cysteine link with no axial amino acid ligand. This heme was named heme ci.</text>
</comment>
<comment type="subunit">
    <text evidence="1">The 4 large subunits of the cytochrome b6-f complex are cytochrome b6, subunit IV (17 kDa polypeptide, PetD), cytochrome f and the Rieske protein, while the 4 small subunits are PetG, PetL, PetM and PetN. The complex functions as a dimer.</text>
</comment>
<comment type="subcellular location">
    <subcellularLocation>
        <location evidence="1">Plastid</location>
        <location evidence="1">Chloroplast thylakoid membrane</location>
        <topology evidence="1">Multi-pass membrane protein</topology>
    </subcellularLocation>
</comment>
<comment type="miscellaneous">
    <text evidence="1">Heme 1 (or BH or b566) is high-potential and absorbs at about 566 nm, and heme 2 (or BL or b562) is low-potential and absorbs at about 562 nm.</text>
</comment>
<comment type="similarity">
    <text evidence="1">Belongs to the cytochrome b family. PetB subfamily.</text>
</comment>
<name>CYB6_LACSA</name>
<feature type="chain" id="PRO_0000275321" description="Cytochrome b6">
    <location>
        <begin position="1"/>
        <end position="215"/>
    </location>
</feature>
<feature type="transmembrane region" description="Helical" evidence="1">
    <location>
        <begin position="32"/>
        <end position="52"/>
    </location>
</feature>
<feature type="transmembrane region" description="Helical" evidence="1">
    <location>
        <begin position="90"/>
        <end position="110"/>
    </location>
</feature>
<feature type="transmembrane region" description="Helical" evidence="1">
    <location>
        <begin position="116"/>
        <end position="136"/>
    </location>
</feature>
<feature type="transmembrane region" description="Helical" evidence="1">
    <location>
        <begin position="186"/>
        <end position="206"/>
    </location>
</feature>
<feature type="binding site" description="covalent" evidence="1">
    <location>
        <position position="35"/>
    </location>
    <ligand>
        <name>heme c</name>
        <dbReference type="ChEBI" id="CHEBI:61717"/>
    </ligand>
</feature>
<feature type="binding site" description="axial binding residue" evidence="1">
    <location>
        <position position="86"/>
    </location>
    <ligand>
        <name>heme b</name>
        <dbReference type="ChEBI" id="CHEBI:60344"/>
        <label>2</label>
    </ligand>
    <ligandPart>
        <name>Fe</name>
        <dbReference type="ChEBI" id="CHEBI:18248"/>
    </ligandPart>
</feature>
<feature type="binding site" description="axial binding residue" evidence="1">
    <location>
        <position position="100"/>
    </location>
    <ligand>
        <name>heme b</name>
        <dbReference type="ChEBI" id="CHEBI:60344"/>
        <label>1</label>
    </ligand>
    <ligandPart>
        <name>Fe</name>
        <dbReference type="ChEBI" id="CHEBI:18248"/>
    </ligandPart>
</feature>
<feature type="binding site" description="axial binding residue" evidence="1">
    <location>
        <position position="187"/>
    </location>
    <ligand>
        <name>heme b</name>
        <dbReference type="ChEBI" id="CHEBI:60344"/>
        <label>2</label>
    </ligand>
    <ligandPart>
        <name>Fe</name>
        <dbReference type="ChEBI" id="CHEBI:18248"/>
    </ligandPart>
</feature>
<feature type="binding site" description="axial binding residue" evidence="1">
    <location>
        <position position="202"/>
    </location>
    <ligand>
        <name>heme b</name>
        <dbReference type="ChEBI" id="CHEBI:60344"/>
        <label>1</label>
    </ligand>
    <ligandPart>
        <name>Fe</name>
        <dbReference type="ChEBI" id="CHEBI:18248"/>
    </ligandPart>
</feature>
<geneLocation type="chloroplast"/>
<keyword id="KW-0150">Chloroplast</keyword>
<keyword id="KW-0249">Electron transport</keyword>
<keyword id="KW-0349">Heme</keyword>
<keyword id="KW-0408">Iron</keyword>
<keyword id="KW-0472">Membrane</keyword>
<keyword id="KW-0479">Metal-binding</keyword>
<keyword id="KW-0602">Photosynthesis</keyword>
<keyword id="KW-0934">Plastid</keyword>
<keyword id="KW-0793">Thylakoid</keyword>
<keyword id="KW-0812">Transmembrane</keyword>
<keyword id="KW-1133">Transmembrane helix</keyword>
<keyword id="KW-0813">Transport</keyword>